<evidence type="ECO:0000255" key="1">
    <source>
        <dbReference type="HAMAP-Rule" id="MF_00651"/>
    </source>
</evidence>
<evidence type="ECO:0000305" key="2"/>
<name>YQGF_PARM1</name>
<dbReference type="EC" id="3.1.-.-" evidence="1"/>
<dbReference type="EMBL" id="AP007255">
    <property type="protein sequence ID" value="BAE50392.1"/>
    <property type="status" value="ALT_INIT"/>
    <property type="molecule type" value="Genomic_DNA"/>
</dbReference>
<dbReference type="RefSeq" id="WP_043746327.1">
    <property type="nucleotide sequence ID" value="NC_007626.1"/>
</dbReference>
<dbReference type="SMR" id="Q2W6Y3"/>
<dbReference type="STRING" id="342108.amb1588"/>
<dbReference type="KEGG" id="mag:amb1588"/>
<dbReference type="HOGENOM" id="CLU_098240_1_1_5"/>
<dbReference type="OrthoDB" id="9796140at2"/>
<dbReference type="Proteomes" id="UP000007058">
    <property type="component" value="Chromosome"/>
</dbReference>
<dbReference type="GO" id="GO:0005829">
    <property type="term" value="C:cytosol"/>
    <property type="evidence" value="ECO:0007669"/>
    <property type="project" value="TreeGrafter"/>
</dbReference>
<dbReference type="GO" id="GO:0004518">
    <property type="term" value="F:nuclease activity"/>
    <property type="evidence" value="ECO:0007669"/>
    <property type="project" value="UniProtKB-KW"/>
</dbReference>
<dbReference type="GO" id="GO:0000967">
    <property type="term" value="P:rRNA 5'-end processing"/>
    <property type="evidence" value="ECO:0007669"/>
    <property type="project" value="UniProtKB-UniRule"/>
</dbReference>
<dbReference type="CDD" id="cd16964">
    <property type="entry name" value="YqgF"/>
    <property type="match status" value="1"/>
</dbReference>
<dbReference type="Gene3D" id="3.30.420.140">
    <property type="entry name" value="YqgF/RNase H-like domain"/>
    <property type="match status" value="1"/>
</dbReference>
<dbReference type="HAMAP" id="MF_00651">
    <property type="entry name" value="Nuclease_YqgF"/>
    <property type="match status" value="1"/>
</dbReference>
<dbReference type="InterPro" id="IPR012337">
    <property type="entry name" value="RNaseH-like_sf"/>
</dbReference>
<dbReference type="InterPro" id="IPR005227">
    <property type="entry name" value="YqgF"/>
</dbReference>
<dbReference type="InterPro" id="IPR006641">
    <property type="entry name" value="YqgF/RNaseH-like_dom"/>
</dbReference>
<dbReference type="InterPro" id="IPR037027">
    <property type="entry name" value="YqgF/RNaseH-like_dom_sf"/>
</dbReference>
<dbReference type="NCBIfam" id="TIGR00250">
    <property type="entry name" value="RNAse_H_YqgF"/>
    <property type="match status" value="1"/>
</dbReference>
<dbReference type="PANTHER" id="PTHR33317">
    <property type="entry name" value="POLYNUCLEOTIDYL TRANSFERASE, RIBONUCLEASE H-LIKE SUPERFAMILY PROTEIN"/>
    <property type="match status" value="1"/>
</dbReference>
<dbReference type="PANTHER" id="PTHR33317:SF4">
    <property type="entry name" value="POLYNUCLEOTIDYL TRANSFERASE, RIBONUCLEASE H-LIKE SUPERFAMILY PROTEIN"/>
    <property type="match status" value="1"/>
</dbReference>
<dbReference type="Pfam" id="PF03652">
    <property type="entry name" value="RuvX"/>
    <property type="match status" value="1"/>
</dbReference>
<dbReference type="SMART" id="SM00732">
    <property type="entry name" value="YqgFc"/>
    <property type="match status" value="1"/>
</dbReference>
<dbReference type="SUPFAM" id="SSF53098">
    <property type="entry name" value="Ribonuclease H-like"/>
    <property type="match status" value="1"/>
</dbReference>
<reference key="1">
    <citation type="journal article" date="2005" name="DNA Res.">
        <title>Complete genome sequence of the facultative anaerobic magnetotactic bacterium Magnetospirillum sp. strain AMB-1.</title>
        <authorList>
            <person name="Matsunaga T."/>
            <person name="Okamura Y."/>
            <person name="Fukuda Y."/>
            <person name="Wahyudi A.T."/>
            <person name="Murase Y."/>
            <person name="Takeyama H."/>
        </authorList>
    </citation>
    <scope>NUCLEOTIDE SEQUENCE [LARGE SCALE GENOMIC DNA]</scope>
    <source>
        <strain>ATCC 700264 / AMB-1</strain>
    </source>
</reference>
<protein>
    <recommendedName>
        <fullName evidence="1">Putative pre-16S rRNA nuclease</fullName>
        <ecNumber evidence="1">3.1.-.-</ecNumber>
    </recommendedName>
</protein>
<organism>
    <name type="scientific">Paramagnetospirillum magneticum (strain ATCC 700264 / AMB-1)</name>
    <name type="common">Magnetospirillum magneticum</name>
    <dbReference type="NCBI Taxonomy" id="342108"/>
    <lineage>
        <taxon>Bacteria</taxon>
        <taxon>Pseudomonadati</taxon>
        <taxon>Pseudomonadota</taxon>
        <taxon>Alphaproteobacteria</taxon>
        <taxon>Rhodospirillales</taxon>
        <taxon>Magnetospirillaceae</taxon>
        <taxon>Paramagnetospirillum</taxon>
    </lineage>
</organism>
<sequence>MPILAPAELLASLSRDQRLLGLDLGSKTIGLALSDVSRTIATPFDTIRRTKFTQDAELLLAVVDKQGVGGLVLGLPVEMDGFEGPRCQSVRSFAANLARLRDMPIAYWDERLSTSAVTRTLLEADSSRKRRAEVVDKMAAAYILQGLLDNRSGFA</sequence>
<comment type="function">
    <text evidence="1">Could be a nuclease involved in processing of the 5'-end of pre-16S rRNA.</text>
</comment>
<comment type="subcellular location">
    <subcellularLocation>
        <location evidence="1">Cytoplasm</location>
    </subcellularLocation>
</comment>
<comment type="similarity">
    <text evidence="1">Belongs to the YqgF nuclease family.</text>
</comment>
<comment type="sequence caution" evidence="2">
    <conflict type="erroneous initiation">
        <sequence resource="EMBL-CDS" id="BAE50392"/>
    </conflict>
    <text>Extended N-terminus.</text>
</comment>
<feature type="chain" id="PRO_0000257546" description="Putative pre-16S rRNA nuclease">
    <location>
        <begin position="1"/>
        <end position="155"/>
    </location>
</feature>
<proteinExistence type="inferred from homology"/>
<keyword id="KW-0963">Cytoplasm</keyword>
<keyword id="KW-0378">Hydrolase</keyword>
<keyword id="KW-0540">Nuclease</keyword>
<keyword id="KW-0690">Ribosome biogenesis</keyword>
<gene>
    <name type="ordered locus">amb1588</name>
</gene>
<accession>Q2W6Y3</accession>